<keyword id="KW-0274">FAD</keyword>
<keyword id="KW-0285">Flavoprotein</keyword>
<keyword id="KW-0521">NADP</keyword>
<keyword id="KW-0560">Oxidoreductase</keyword>
<comment type="catalytic activity">
    <reaction evidence="1">
        <text>2 reduced [2Fe-2S]-[ferredoxin] + NADP(+) + H(+) = 2 oxidized [2Fe-2S]-[ferredoxin] + NADPH</text>
        <dbReference type="Rhea" id="RHEA:20125"/>
        <dbReference type="Rhea" id="RHEA-COMP:10000"/>
        <dbReference type="Rhea" id="RHEA-COMP:10001"/>
        <dbReference type="ChEBI" id="CHEBI:15378"/>
        <dbReference type="ChEBI" id="CHEBI:33737"/>
        <dbReference type="ChEBI" id="CHEBI:33738"/>
        <dbReference type="ChEBI" id="CHEBI:57783"/>
        <dbReference type="ChEBI" id="CHEBI:58349"/>
        <dbReference type="EC" id="1.18.1.2"/>
    </reaction>
</comment>
<comment type="cofactor">
    <cofactor evidence="1">
        <name>FAD</name>
        <dbReference type="ChEBI" id="CHEBI:57692"/>
    </cofactor>
    <text evidence="1">Binds 1 FAD per subunit.</text>
</comment>
<comment type="subunit">
    <text evidence="1">Homodimer.</text>
</comment>
<comment type="similarity">
    <text evidence="1">Belongs to the ferredoxin--NADP reductase type 2 family.</text>
</comment>
<feature type="chain" id="PRO_0000364920" description="Ferredoxin--NADP reductase">
    <location>
        <begin position="1"/>
        <end position="334"/>
    </location>
</feature>
<feature type="binding site" evidence="1">
    <location>
        <position position="33"/>
    </location>
    <ligand>
        <name>FAD</name>
        <dbReference type="ChEBI" id="CHEBI:57692"/>
    </ligand>
</feature>
<feature type="binding site" evidence="1">
    <location>
        <position position="41"/>
    </location>
    <ligand>
        <name>FAD</name>
        <dbReference type="ChEBI" id="CHEBI:57692"/>
    </ligand>
</feature>
<feature type="binding site" evidence="1">
    <location>
        <position position="46"/>
    </location>
    <ligand>
        <name>FAD</name>
        <dbReference type="ChEBI" id="CHEBI:57692"/>
    </ligand>
</feature>
<feature type="binding site" evidence="1">
    <location>
        <position position="86"/>
    </location>
    <ligand>
        <name>FAD</name>
        <dbReference type="ChEBI" id="CHEBI:57692"/>
    </ligand>
</feature>
<feature type="binding site" evidence="1">
    <location>
        <position position="120"/>
    </location>
    <ligand>
        <name>FAD</name>
        <dbReference type="ChEBI" id="CHEBI:57692"/>
    </ligand>
</feature>
<feature type="binding site" evidence="1">
    <location>
        <position position="286"/>
    </location>
    <ligand>
        <name>FAD</name>
        <dbReference type="ChEBI" id="CHEBI:57692"/>
    </ligand>
</feature>
<feature type="binding site" evidence="1">
    <location>
        <position position="327"/>
    </location>
    <ligand>
        <name>FAD</name>
        <dbReference type="ChEBI" id="CHEBI:57692"/>
    </ligand>
</feature>
<gene>
    <name type="ordered locus">A1C_03465</name>
</gene>
<organism>
    <name type="scientific">Rickettsia akari (strain Hartford)</name>
    <dbReference type="NCBI Taxonomy" id="293614"/>
    <lineage>
        <taxon>Bacteria</taxon>
        <taxon>Pseudomonadati</taxon>
        <taxon>Pseudomonadota</taxon>
        <taxon>Alphaproteobacteria</taxon>
        <taxon>Rickettsiales</taxon>
        <taxon>Rickettsiaceae</taxon>
        <taxon>Rickettsieae</taxon>
        <taxon>Rickettsia</taxon>
        <taxon>spotted fever group</taxon>
    </lineage>
</organism>
<proteinExistence type="inferred from homology"/>
<dbReference type="EC" id="1.18.1.2" evidence="1"/>
<dbReference type="EMBL" id="CP000847">
    <property type="protein sequence ID" value="ABV74977.1"/>
    <property type="molecule type" value="Genomic_DNA"/>
</dbReference>
<dbReference type="RefSeq" id="WP_012149610.1">
    <property type="nucleotide sequence ID" value="NC_009881.1"/>
</dbReference>
<dbReference type="SMR" id="A8GNK2"/>
<dbReference type="STRING" id="293614.A1C_03465"/>
<dbReference type="KEGG" id="rak:A1C_03465"/>
<dbReference type="eggNOG" id="COG0492">
    <property type="taxonomic scope" value="Bacteria"/>
</dbReference>
<dbReference type="HOGENOM" id="CLU_031864_5_5_5"/>
<dbReference type="Proteomes" id="UP000006830">
    <property type="component" value="Chromosome"/>
</dbReference>
<dbReference type="GO" id="GO:0004324">
    <property type="term" value="F:ferredoxin-NADP+ reductase activity"/>
    <property type="evidence" value="ECO:0007669"/>
    <property type="project" value="UniProtKB-UniRule"/>
</dbReference>
<dbReference type="GO" id="GO:0050660">
    <property type="term" value="F:flavin adenine dinucleotide binding"/>
    <property type="evidence" value="ECO:0007669"/>
    <property type="project" value="UniProtKB-UniRule"/>
</dbReference>
<dbReference type="GO" id="GO:0050661">
    <property type="term" value="F:NADP binding"/>
    <property type="evidence" value="ECO:0007669"/>
    <property type="project" value="UniProtKB-UniRule"/>
</dbReference>
<dbReference type="Gene3D" id="3.50.50.60">
    <property type="entry name" value="FAD/NAD(P)-binding domain"/>
    <property type="match status" value="2"/>
</dbReference>
<dbReference type="HAMAP" id="MF_01685">
    <property type="entry name" value="FENR2"/>
    <property type="match status" value="1"/>
</dbReference>
<dbReference type="InterPro" id="IPR036188">
    <property type="entry name" value="FAD/NAD-bd_sf"/>
</dbReference>
<dbReference type="InterPro" id="IPR023753">
    <property type="entry name" value="FAD/NAD-binding_dom"/>
</dbReference>
<dbReference type="InterPro" id="IPR022890">
    <property type="entry name" value="Fd--NADP_Rdtase_type_2"/>
</dbReference>
<dbReference type="InterPro" id="IPR050097">
    <property type="entry name" value="Ferredoxin-NADP_redctase_2"/>
</dbReference>
<dbReference type="PANTHER" id="PTHR48105">
    <property type="entry name" value="THIOREDOXIN REDUCTASE 1-RELATED-RELATED"/>
    <property type="match status" value="1"/>
</dbReference>
<dbReference type="Pfam" id="PF07992">
    <property type="entry name" value="Pyr_redox_2"/>
    <property type="match status" value="1"/>
</dbReference>
<dbReference type="PRINTS" id="PR00368">
    <property type="entry name" value="FADPNR"/>
</dbReference>
<dbReference type="PRINTS" id="PR00469">
    <property type="entry name" value="PNDRDTASEII"/>
</dbReference>
<dbReference type="SUPFAM" id="SSF51905">
    <property type="entry name" value="FAD/NAD(P)-binding domain"/>
    <property type="match status" value="1"/>
</dbReference>
<sequence length="334" mass="36783">MHNTDVIIIGAGPVGLFTIFQAGMLGMKCHVIDAQETVGGQCITLYPEKPIYDIPAYPKIAAEELIKQLEFQAAPFKPVYHLNQHATDLNKQGDFFEIRTSKNTIIKSKAIIIAAGAGSFGPNKPPLANIEDFEGKSVFYFINNKSKFAGKNIVIAGGGDSAVDWAISLSEIANKIYLVHRRDKFTAAPESVRQLRDIAETGKIELVTGYQLNALDGNNGTLQTVIVKDLQNNIRKLDANVLLPFFGLKQDLGSLANWGLDVKLHHIEVDNSYYQTNIEGIYAIGDIAHYAGKLKLILTGFAEAASSIHHAYIRVFNGQALHFEYSTTKYGERK</sequence>
<name>FENR_RICAH</name>
<evidence type="ECO:0000255" key="1">
    <source>
        <dbReference type="HAMAP-Rule" id="MF_01685"/>
    </source>
</evidence>
<protein>
    <recommendedName>
        <fullName evidence="1">Ferredoxin--NADP reductase</fullName>
        <shortName evidence="1">FNR</shortName>
        <shortName evidence="1">Fd-NADP(+) reductase</shortName>
        <ecNumber evidence="1">1.18.1.2</ecNumber>
    </recommendedName>
</protein>
<reference key="1">
    <citation type="submission" date="2007-09" db="EMBL/GenBank/DDBJ databases">
        <title>Complete genome sequence of Rickettsia akari.</title>
        <authorList>
            <person name="Madan A."/>
            <person name="Fahey J."/>
            <person name="Helton E."/>
            <person name="Ketteman M."/>
            <person name="Madan A."/>
            <person name="Rodrigues S."/>
            <person name="Sanchez A."/>
            <person name="Whiting M."/>
            <person name="Dasch G."/>
            <person name="Eremeeva M."/>
        </authorList>
    </citation>
    <scope>NUCLEOTIDE SEQUENCE [LARGE SCALE GENOMIC DNA]</scope>
    <source>
        <strain>Hartford</strain>
    </source>
</reference>
<accession>A8GNK2</accession>